<sequence length="94" mass="10182">MLKPLGNRVIIEKKEQEQAAKSGIVLTDSAKEKSNEGVIIAVGQGRLLDNGTQVAPQVSEGDTIVFQQYAGTEVKRGAQTYLILNEEDILAIIE</sequence>
<keyword id="KW-0143">Chaperone</keyword>
<keyword id="KW-0963">Cytoplasm</keyword>
<keyword id="KW-0346">Stress response</keyword>
<organism>
    <name type="scientific">Staphylococcus epidermidis</name>
    <dbReference type="NCBI Taxonomy" id="1282"/>
    <lineage>
        <taxon>Bacteria</taxon>
        <taxon>Bacillati</taxon>
        <taxon>Bacillota</taxon>
        <taxon>Bacilli</taxon>
        <taxon>Bacillales</taxon>
        <taxon>Staphylococcaceae</taxon>
        <taxon>Staphylococcus</taxon>
    </lineage>
</organism>
<comment type="function">
    <text evidence="1">Together with the chaperonin GroEL, plays an essential role in assisting protein folding. The GroEL-GroES system forms a nano-cage that allows encapsulation of the non-native substrate proteins and provides a physical environment optimized to promote and accelerate protein folding. GroES binds to the apical surface of the GroEL ring, thereby capping the opening of the GroEL channel.</text>
</comment>
<comment type="subunit">
    <text evidence="1">Heptamer of 7 subunits arranged in a ring. Interacts with the chaperonin GroEL.</text>
</comment>
<comment type="subcellular location">
    <subcellularLocation>
        <location evidence="1">Cytoplasm</location>
    </subcellularLocation>
</comment>
<comment type="similarity">
    <text evidence="1 2">Belongs to the GroES chaperonin family.</text>
</comment>
<reference key="1">
    <citation type="submission" date="1994-08" db="EMBL/GenBank/DDBJ databases">
        <title>Analysis of cloned hsp60 and hsp10 genes from Staphylococcus epidermidis.</title>
        <authorList>
            <person name="Goh S.H."/>
            <person name="Wood J."/>
            <person name="Hemmingsen S."/>
            <person name="Chow A.W."/>
        </authorList>
    </citation>
    <scope>NUCLEOTIDE SEQUENCE [GENOMIC DNA]</scope>
    <source>
        <strain>9759</strain>
    </source>
</reference>
<name>CH10_STAEP</name>
<dbReference type="EMBL" id="U13618">
    <property type="protein sequence ID" value="AAA21333.1"/>
    <property type="molecule type" value="Genomic_DNA"/>
</dbReference>
<dbReference type="SMR" id="P0C0N2"/>
<dbReference type="GO" id="GO:0005737">
    <property type="term" value="C:cytoplasm"/>
    <property type="evidence" value="ECO:0007669"/>
    <property type="project" value="UniProtKB-SubCell"/>
</dbReference>
<dbReference type="GO" id="GO:0005524">
    <property type="term" value="F:ATP binding"/>
    <property type="evidence" value="ECO:0007669"/>
    <property type="project" value="InterPro"/>
</dbReference>
<dbReference type="GO" id="GO:0046872">
    <property type="term" value="F:metal ion binding"/>
    <property type="evidence" value="ECO:0007669"/>
    <property type="project" value="TreeGrafter"/>
</dbReference>
<dbReference type="GO" id="GO:0044183">
    <property type="term" value="F:protein folding chaperone"/>
    <property type="evidence" value="ECO:0007669"/>
    <property type="project" value="InterPro"/>
</dbReference>
<dbReference type="GO" id="GO:0051087">
    <property type="term" value="F:protein-folding chaperone binding"/>
    <property type="evidence" value="ECO:0007669"/>
    <property type="project" value="TreeGrafter"/>
</dbReference>
<dbReference type="GO" id="GO:0051082">
    <property type="term" value="F:unfolded protein binding"/>
    <property type="evidence" value="ECO:0007669"/>
    <property type="project" value="TreeGrafter"/>
</dbReference>
<dbReference type="GO" id="GO:0051085">
    <property type="term" value="P:chaperone cofactor-dependent protein refolding"/>
    <property type="evidence" value="ECO:0007669"/>
    <property type="project" value="TreeGrafter"/>
</dbReference>
<dbReference type="CDD" id="cd00320">
    <property type="entry name" value="cpn10"/>
    <property type="match status" value="1"/>
</dbReference>
<dbReference type="FunFam" id="2.30.33.40:FF:000001">
    <property type="entry name" value="10 kDa chaperonin"/>
    <property type="match status" value="1"/>
</dbReference>
<dbReference type="Gene3D" id="2.30.33.40">
    <property type="entry name" value="GroES chaperonin"/>
    <property type="match status" value="1"/>
</dbReference>
<dbReference type="HAMAP" id="MF_00580">
    <property type="entry name" value="CH10"/>
    <property type="match status" value="1"/>
</dbReference>
<dbReference type="InterPro" id="IPR020818">
    <property type="entry name" value="Chaperonin_GroES"/>
</dbReference>
<dbReference type="InterPro" id="IPR037124">
    <property type="entry name" value="Chaperonin_GroES_sf"/>
</dbReference>
<dbReference type="InterPro" id="IPR018369">
    <property type="entry name" value="Chaprnonin_Cpn10_CS"/>
</dbReference>
<dbReference type="InterPro" id="IPR011032">
    <property type="entry name" value="GroES-like_sf"/>
</dbReference>
<dbReference type="NCBIfam" id="NF001531">
    <property type="entry name" value="PRK00364.2-2"/>
    <property type="match status" value="1"/>
</dbReference>
<dbReference type="NCBIfam" id="NF001532">
    <property type="entry name" value="PRK00364.2-3"/>
    <property type="match status" value="1"/>
</dbReference>
<dbReference type="NCBIfam" id="NF001533">
    <property type="entry name" value="PRK00364.2-4"/>
    <property type="match status" value="1"/>
</dbReference>
<dbReference type="NCBIfam" id="NF001534">
    <property type="entry name" value="PRK00364.2-5"/>
    <property type="match status" value="1"/>
</dbReference>
<dbReference type="PANTHER" id="PTHR10772">
    <property type="entry name" value="10 KDA HEAT SHOCK PROTEIN"/>
    <property type="match status" value="1"/>
</dbReference>
<dbReference type="PANTHER" id="PTHR10772:SF58">
    <property type="entry name" value="CO-CHAPERONIN GROES"/>
    <property type="match status" value="1"/>
</dbReference>
<dbReference type="Pfam" id="PF00166">
    <property type="entry name" value="Cpn10"/>
    <property type="match status" value="1"/>
</dbReference>
<dbReference type="PRINTS" id="PR00297">
    <property type="entry name" value="CHAPERONIN10"/>
</dbReference>
<dbReference type="SMART" id="SM00883">
    <property type="entry name" value="Cpn10"/>
    <property type="match status" value="1"/>
</dbReference>
<dbReference type="SUPFAM" id="SSF50129">
    <property type="entry name" value="GroES-like"/>
    <property type="match status" value="1"/>
</dbReference>
<dbReference type="PROSITE" id="PS00681">
    <property type="entry name" value="CHAPERONINS_CPN10"/>
    <property type="match status" value="1"/>
</dbReference>
<accession>P0C0N2</accession>
<accession>P48227</accession>
<evidence type="ECO:0000255" key="1">
    <source>
        <dbReference type="HAMAP-Rule" id="MF_00580"/>
    </source>
</evidence>
<evidence type="ECO:0000305" key="2"/>
<proteinExistence type="inferred from homology"/>
<feature type="chain" id="PRO_0000174846" description="Co-chaperonin GroES">
    <location>
        <begin position="1"/>
        <end position="94"/>
    </location>
</feature>
<gene>
    <name evidence="1" type="primary">groES</name>
    <name evidence="1" type="synonym">groS</name>
    <name type="synonym">hsp10</name>
</gene>
<protein>
    <recommendedName>
        <fullName evidence="1">Co-chaperonin GroES</fullName>
    </recommendedName>
    <alternativeName>
        <fullName evidence="1">10 kDa chaperonin</fullName>
    </alternativeName>
    <alternativeName>
        <fullName evidence="1">Chaperonin-10</fullName>
        <shortName evidence="1">Cpn10</shortName>
    </alternativeName>
    <alternativeName>
        <fullName>Heat shock protein 10</fullName>
    </alternativeName>
</protein>